<reference key="1">
    <citation type="journal article" date="2020" name="Angew. Chem. Int. Ed.">
        <title>Quinolactacin biosynthesis involves non-ribosomal-peptide-synthetase-catalyzed Dieckmann condensation to form the quinolone-gamma-lactam hybrid.</title>
        <authorList>
            <person name="Zhao F."/>
            <person name="Liu Z."/>
            <person name="Yang S."/>
            <person name="Ding N."/>
            <person name="Gao X."/>
        </authorList>
    </citation>
    <scope>FUNCTION</scope>
    <scope>DISRUPTION PHENOTYPE</scope>
    <scope>CATALYTIC ACTIVITY</scope>
    <scope>MUTAGENESIS OF HIS-289</scope>
    <scope>PATHWAY</scope>
</reference>
<evidence type="ECO:0000255" key="1">
    <source>
        <dbReference type="PROSITE-ProRule" id="PRU00683"/>
    </source>
</evidence>
<evidence type="ECO:0000269" key="2">
    <source>
    </source>
</evidence>
<evidence type="ECO:0000303" key="3">
    <source>
    </source>
</evidence>
<name>QULF_PENCI</name>
<dbReference type="EC" id="1.13.12.-" evidence="2"/>
<dbReference type="SMR" id="P0DUR7"/>
<dbReference type="GO" id="GO:0010181">
    <property type="term" value="F:FMN binding"/>
    <property type="evidence" value="ECO:0007669"/>
    <property type="project" value="InterPro"/>
</dbReference>
<dbReference type="GO" id="GO:0016491">
    <property type="term" value="F:oxidoreductase activity"/>
    <property type="evidence" value="ECO:0007669"/>
    <property type="project" value="UniProtKB-KW"/>
</dbReference>
<dbReference type="CDD" id="cd03332">
    <property type="entry name" value="LMO_FMN"/>
    <property type="match status" value="1"/>
</dbReference>
<dbReference type="FunFam" id="3.20.20.70:FF:000132">
    <property type="entry name" value="FMN dependent dehydrogenase"/>
    <property type="match status" value="1"/>
</dbReference>
<dbReference type="Gene3D" id="3.20.20.70">
    <property type="entry name" value="Aldolase class I"/>
    <property type="match status" value="1"/>
</dbReference>
<dbReference type="InterPro" id="IPR013785">
    <property type="entry name" value="Aldolase_TIM"/>
</dbReference>
<dbReference type="InterPro" id="IPR012133">
    <property type="entry name" value="Alpha-hydoxy_acid_DH_FMN"/>
</dbReference>
<dbReference type="InterPro" id="IPR000262">
    <property type="entry name" value="FMN-dep_DH"/>
</dbReference>
<dbReference type="InterPro" id="IPR037396">
    <property type="entry name" value="FMN_HAD"/>
</dbReference>
<dbReference type="InterPro" id="IPR008259">
    <property type="entry name" value="FMN_hydac_DH_AS"/>
</dbReference>
<dbReference type="InterPro" id="IPR037350">
    <property type="entry name" value="LMO_FMN"/>
</dbReference>
<dbReference type="PANTHER" id="PTHR10578:SF86">
    <property type="entry name" value="DEPENDENT DEHYDROGENASE, PUTATIVE (AFU_ORTHOLOGUE AFUA_6G02720)-RELATED"/>
    <property type="match status" value="1"/>
</dbReference>
<dbReference type="PANTHER" id="PTHR10578">
    <property type="entry name" value="S -2-HYDROXY-ACID OXIDASE-RELATED"/>
    <property type="match status" value="1"/>
</dbReference>
<dbReference type="Pfam" id="PF01070">
    <property type="entry name" value="FMN_dh"/>
    <property type="match status" value="1"/>
</dbReference>
<dbReference type="PIRSF" id="PIRSF000138">
    <property type="entry name" value="Al-hdrx_acd_dh"/>
    <property type="match status" value="1"/>
</dbReference>
<dbReference type="SUPFAM" id="SSF51395">
    <property type="entry name" value="FMN-linked oxidoreductases"/>
    <property type="match status" value="1"/>
</dbReference>
<dbReference type="PROSITE" id="PS00557">
    <property type="entry name" value="FMN_HYDROXY_ACID_DH_1"/>
    <property type="match status" value="1"/>
</dbReference>
<dbReference type="PROSITE" id="PS51349">
    <property type="entry name" value="FMN_HYDROXY_ACID_DH_2"/>
    <property type="match status" value="1"/>
</dbReference>
<feature type="chain" id="PRO_0000453483" description="FMN-dependent alpha-hydroxy acid dehydrogenase qulF">
    <location>
        <begin position="1"/>
        <end position="402"/>
    </location>
</feature>
<feature type="domain" description="FMN hydroxy acid dehydrogenase" evidence="1">
    <location>
        <begin position="22"/>
        <end position="394"/>
    </location>
</feature>
<feature type="active site" description="Proton acceptor" evidence="1">
    <location>
        <position position="289"/>
    </location>
</feature>
<feature type="binding site" evidence="1">
    <location>
        <position position="48"/>
    </location>
    <ligand>
        <name>a 2-oxocarboxylate</name>
        <dbReference type="ChEBI" id="CHEBI:35179"/>
    </ligand>
</feature>
<feature type="binding site" evidence="1">
    <location>
        <position position="130"/>
    </location>
    <ligand>
        <name>FMN</name>
        <dbReference type="ChEBI" id="CHEBI:58210"/>
    </ligand>
</feature>
<feature type="binding site" evidence="1">
    <location>
        <position position="152"/>
    </location>
    <ligand>
        <name>FMN</name>
        <dbReference type="ChEBI" id="CHEBI:58210"/>
    </ligand>
</feature>
<feature type="binding site" evidence="1">
    <location>
        <position position="154"/>
    </location>
    <ligand>
        <name>a 2-oxocarboxylate</name>
        <dbReference type="ChEBI" id="CHEBI:35179"/>
    </ligand>
</feature>
<feature type="binding site" evidence="1">
    <location>
        <position position="189"/>
    </location>
    <ligand>
        <name>a 2-oxocarboxylate</name>
        <dbReference type="ChEBI" id="CHEBI:35179"/>
    </ligand>
</feature>
<feature type="binding site" evidence="1">
    <location>
        <position position="265"/>
    </location>
    <ligand>
        <name>FMN</name>
        <dbReference type="ChEBI" id="CHEBI:58210"/>
    </ligand>
</feature>
<feature type="binding site" evidence="1">
    <location>
        <position position="292"/>
    </location>
    <ligand>
        <name>a 2-oxocarboxylate</name>
        <dbReference type="ChEBI" id="CHEBI:35179"/>
    </ligand>
</feature>
<feature type="binding site" evidence="1">
    <location>
        <begin position="320"/>
        <end position="324"/>
    </location>
    <ligand>
        <name>FMN</name>
        <dbReference type="ChEBI" id="CHEBI:58210"/>
    </ligand>
</feature>
<feature type="binding site" evidence="1">
    <location>
        <begin position="343"/>
        <end position="344"/>
    </location>
    <ligand>
        <name>FMN</name>
        <dbReference type="ChEBI" id="CHEBI:58210"/>
    </ligand>
</feature>
<feature type="mutagenesis site" description="Blocks the formatin of 2-aminobenzoylacetamide." evidence="2">
    <original>H</original>
    <variation>A</variation>
    <location>
        <position position="289"/>
    </location>
</feature>
<gene>
    <name evidence="3" type="primary">qulF</name>
</gene>
<keyword id="KW-0285">Flavoprotein</keyword>
<keyword id="KW-0288">FMN</keyword>
<keyword id="KW-0560">Oxidoreductase</keyword>
<organism>
    <name type="scientific">Penicillium citrinum</name>
    <dbReference type="NCBI Taxonomy" id="5077"/>
    <lineage>
        <taxon>Eukaryota</taxon>
        <taxon>Fungi</taxon>
        <taxon>Dikarya</taxon>
        <taxon>Ascomycota</taxon>
        <taxon>Pezizomycotina</taxon>
        <taxon>Eurotiomycetes</taxon>
        <taxon>Eurotiomycetidae</taxon>
        <taxon>Eurotiales</taxon>
        <taxon>Aspergillaceae</taxon>
        <taxon>Penicillium</taxon>
    </lineage>
</organism>
<comment type="function">
    <text evidence="2">FMN-dependent alpha-hydroxy acid dehydrogenase; part of the gene cluster that mediates the biosynthesis of quinolactacin A2 (QUL A2), a fungal alkaloid that features a quinolone-gamma-lactam hybrid, which is a potential pharmacophore for the treatment of cancer and Alzheimer's disease (PubMed:32663343). The quinolone-gamma-lactam hybrid scaffold is synthesized from the combination of L-isoleucine (L-Ile) and the nonproteinogenic amino acid L-kynurenine, followed by quinolone cyclization, oxidative decarboxylation, and lactam formation (PubMed:32663343). Additionally, the N-methyl group is derived from methionine, which might be catalyzed by an S-adenosylmethionine (SAM)-dependent methyltransferase (PubMed:32663343). Bioconversion of L-tryptophan to L-kynurenine could be catalyzed by the indoleamine-2,3-dioxygenase (IDO) qulI to produce an unstable product, N-formyl-L-kynurenine, followed by kynurenine formamidase catalyzed hydrolysis (PubMed:32663343). QulM then acts as a methyltransferase that methylates L-kynurenine at the N-4 position (PubMed:32663343). The FMN-dependent alpha-hydroxy acid dehydrogenase qulF than functions as an oxidative decarboxylase which converts N-methylkynurenine into 2-aminobenzoylacetamide via 2 tandem reactions, including dehydrogenation and decarboxylation (PubMed:32663343). An amidase located outside of the qul gene cluster further produces the unstable beta-keto acid precursor N-methyl-2-aminobenzoylacetate, which could be spontaneously dehydrated to form N-methyl-4-hydroxy-2-quinolone (PubMed:32663343). The NRPS qulB is able to incorporate N-methyl-2-aminobenzoylacetate and efficiently compete with the spontaneous reaction (PubMed:32663343). By further extending the beta-keto acid with L-Ile, qulA performs a Dieckmann condensation to form the gamma-lactam ring and release a 4-ketopyrrolidinone intermediate from the assembly line (PubMed:32663343). This intermediate could plausibly further undergo a spontaneous cyclization to yield the final quinolone-gamma-lactam hybrid structure (PubMed:32663343).</text>
</comment>
<comment type="cofactor">
    <cofactor evidence="1 2">
        <name>FMN</name>
        <dbReference type="ChEBI" id="CHEBI:58210"/>
    </cofactor>
</comment>
<comment type="disruption phenotype">
    <text evidence="2">Impairs the production of quinolactacin A2 and leads to the accumulatin of N-methylkynurenine.</text>
</comment>
<comment type="similarity">
    <text evidence="1">Belongs to the FMN-dependent alpha-hydroxy acid dehydrogenase family.</text>
</comment>
<proteinExistence type="evidence at protein level"/>
<protein>
    <recommendedName>
        <fullName evidence="3">FMN-dependent alpha-hydroxy acid dehydrogenase qulF</fullName>
        <ecNumber evidence="2">1.13.12.-</ecNumber>
    </recommendedName>
    <alternativeName>
        <fullName evidence="3">Quinolactacin A2 biosynthesis cluster protein F</fullName>
    </alternativeName>
</protein>
<sequence>MPPVNFGSYQTKIYHDGTNLNRLPAITTNPTLLEKHAREVLSSRAYSYIAGGAGEKSTMEANRLAFRQWKLVPRVMRPMDDQSISVNLFGQEYKSPLIVGPVGVQGLFHRDKETGVAQVCSELDVPYTLSTASSSSIEDVAAANQAGHRWFQLYWVHDEEILLSLLKRAKENGFTVLVVSLDTWTLGWRPTDLDQGYFPFYAGIGNDVGFSDPVFRAKHEKKGGKIEDDIIGAANAWVSELDDRPHTWEQVEFLRKHWQGPIVLKGIQHADDARRALETGCEGLVVSNHGGRQVDGAIGSLDALPDIVDAVGDKMTVMFDSGVRTGADVIKALCLGAKAVLVGRPVIYGLAIGGKEGAKSVIECLLADLWQGMGLAGMRTVADCNRDCMRRISYPGDLKTML</sequence>
<accession>P0DUR7</accession>